<sequence>MKIATKYHGDIEIHEKDIVRFEQGIPGFLEEKQFVLLPLEDTPFIILQSVNTPALGFVLIEPFSYFPTYEIDLDDNTLEQLQITGEQDVALYVILTVADPFDDTTANLQAPIVINVHKRLGKQVILTNTNYKTKHRLFPEKVAK</sequence>
<gene>
    <name evidence="2" type="primary">fliW</name>
    <name type="ordered locus">GTNG_3059</name>
</gene>
<reference key="1">
    <citation type="journal article" date="2007" name="Proc. Natl. Acad. Sci. U.S.A.">
        <title>Genome and proteome of long-chain alkane degrading Geobacillus thermodenitrificans NG80-2 isolated from a deep-subsurface oil reservoir.</title>
        <authorList>
            <person name="Feng L."/>
            <person name="Wang W."/>
            <person name="Cheng J."/>
            <person name="Ren Y."/>
            <person name="Zhao G."/>
            <person name="Gao C."/>
            <person name="Tang Y."/>
            <person name="Liu X."/>
            <person name="Han W."/>
            <person name="Peng X."/>
            <person name="Liu R."/>
            <person name="Wang L."/>
        </authorList>
    </citation>
    <scope>NUCLEOTIDE SEQUENCE [LARGE SCALE GENOMIC DNA]</scope>
    <source>
        <strain>NG80-2</strain>
    </source>
</reference>
<reference evidence="4 5 6" key="2">
    <citation type="journal article" date="2016" name="Proc. Natl. Acad. Sci. U.S.A.">
        <title>Structural basis for the CsrA-dependent modulation of translation initiation by an ancient regulatory protein.</title>
        <authorList>
            <person name="Altegoer F."/>
            <person name="Rensing S.A."/>
            <person name="Bange G."/>
        </authorList>
    </citation>
    <scope>X-RAY CRYSTALLOGRAPHY (1.45 ANGSTROMS) OF 2-144 ALONE AND IN COMPLEX WITH CSRA</scope>
    <scope>FUNCTION</scope>
    <scope>SUBUNIT</scope>
    <scope>MUTAGENESIS OF PHE-44; GLN-123 AND ILE-125</scope>
    <source>
        <strain>NG-80</strain>
    </source>
</reference>
<name>FLIW_GEOTN</name>
<comment type="function">
    <text evidence="2">Acts as an anti-CsrA protein, binds CsrA and prevents it from repressing translation of its target genes, one of which is flagellin. Binds to flagellin and participates in the assembly of the flagellum.</text>
</comment>
<comment type="function">
    <text evidence="3">Allosterically inhibits CsrA binding to mRNA in a non-competitive fashion by preventing CsrA binding to the 5'-UTR (PubMed:27551070).</text>
</comment>
<comment type="subunit">
    <text evidence="1 3">Monomer (PubMed:27551070). One copy interacts with the each alpha-helical wing of the CsrA homodimer, yielding a FliW-CsrA(2)-FliW complex (PubMed:27551070). Comparison with a CsrA-mRNA structure (2JPP) suggests CsrA cannot bind both mRNA and FliW at the same time (PubMed:27551070). Interacts with flagellin (By similarity).</text>
</comment>
<comment type="subcellular location">
    <subcellularLocation>
        <location evidence="2">Cytoplasm</location>
    </subcellularLocation>
</comment>
<comment type="similarity">
    <text evidence="2">Belongs to the FliW family.</text>
</comment>
<protein>
    <recommendedName>
        <fullName evidence="2">Flagellar assembly factor FliW</fullName>
    </recommendedName>
</protein>
<dbReference type="EMBL" id="CP000557">
    <property type="protein sequence ID" value="ABO68404.1"/>
    <property type="molecule type" value="Genomic_DNA"/>
</dbReference>
<dbReference type="RefSeq" id="WP_011888205.1">
    <property type="nucleotide sequence ID" value="NC_009328.1"/>
</dbReference>
<dbReference type="PDB" id="5DMB">
    <property type="method" value="X-ray"/>
    <property type="resolution" value="2.30 A"/>
    <property type="chains" value="A=2-144"/>
</dbReference>
<dbReference type="PDB" id="5DMD">
    <property type="method" value="X-ray"/>
    <property type="resolution" value="1.45 A"/>
    <property type="chains" value="A/B=2-144"/>
</dbReference>
<dbReference type="PDB" id="5JAK">
    <property type="method" value="X-ray"/>
    <property type="resolution" value="1.80 A"/>
    <property type="chains" value="A=2-144"/>
</dbReference>
<dbReference type="PDBsum" id="5DMB"/>
<dbReference type="PDBsum" id="5DMD"/>
<dbReference type="PDBsum" id="5JAK"/>
<dbReference type="SMR" id="A4ISV0"/>
<dbReference type="KEGG" id="gtn:GTNG_3059"/>
<dbReference type="eggNOG" id="COG1699">
    <property type="taxonomic scope" value="Bacteria"/>
</dbReference>
<dbReference type="HOGENOM" id="CLU_112356_0_2_9"/>
<dbReference type="Proteomes" id="UP000001578">
    <property type="component" value="Chromosome"/>
</dbReference>
<dbReference type="GO" id="GO:0005737">
    <property type="term" value="C:cytoplasm"/>
    <property type="evidence" value="ECO:0007669"/>
    <property type="project" value="UniProtKB-SubCell"/>
</dbReference>
<dbReference type="GO" id="GO:0044780">
    <property type="term" value="P:bacterial-type flagellum assembly"/>
    <property type="evidence" value="ECO:0007669"/>
    <property type="project" value="UniProtKB-UniRule"/>
</dbReference>
<dbReference type="GO" id="GO:0006417">
    <property type="term" value="P:regulation of translation"/>
    <property type="evidence" value="ECO:0007669"/>
    <property type="project" value="UniProtKB-KW"/>
</dbReference>
<dbReference type="Gene3D" id="2.30.290.10">
    <property type="entry name" value="BH3618-like"/>
    <property type="match status" value="1"/>
</dbReference>
<dbReference type="HAMAP" id="MF_01185">
    <property type="entry name" value="FliW"/>
    <property type="match status" value="1"/>
</dbReference>
<dbReference type="InterPro" id="IPR003775">
    <property type="entry name" value="Flagellar_assembly_factor_FliW"/>
</dbReference>
<dbReference type="InterPro" id="IPR024046">
    <property type="entry name" value="Flagellar_assmbl_FliW_dom_sf"/>
</dbReference>
<dbReference type="NCBIfam" id="NF009793">
    <property type="entry name" value="PRK13285.1-1"/>
    <property type="match status" value="1"/>
</dbReference>
<dbReference type="PANTHER" id="PTHR39190">
    <property type="entry name" value="FLAGELLAR ASSEMBLY FACTOR FLIW"/>
    <property type="match status" value="1"/>
</dbReference>
<dbReference type="PANTHER" id="PTHR39190:SF1">
    <property type="entry name" value="FLAGELLAR ASSEMBLY FACTOR FLIW"/>
    <property type="match status" value="1"/>
</dbReference>
<dbReference type="Pfam" id="PF02623">
    <property type="entry name" value="FliW"/>
    <property type="match status" value="1"/>
</dbReference>
<dbReference type="SUPFAM" id="SSF141457">
    <property type="entry name" value="BH3618-like"/>
    <property type="match status" value="1"/>
</dbReference>
<organism>
    <name type="scientific">Geobacillus thermodenitrificans (strain NG80-2)</name>
    <dbReference type="NCBI Taxonomy" id="420246"/>
    <lineage>
        <taxon>Bacteria</taxon>
        <taxon>Bacillati</taxon>
        <taxon>Bacillota</taxon>
        <taxon>Bacilli</taxon>
        <taxon>Bacillales</taxon>
        <taxon>Anoxybacillaceae</taxon>
        <taxon>Geobacillus</taxon>
    </lineage>
</organism>
<feature type="chain" id="PRO_1000065818" description="Flagellar assembly factor FliW">
    <location>
        <begin position="1"/>
        <end position="144"/>
    </location>
</feature>
<feature type="mutagenesis site" description="Loss of interaction with CsrA." evidence="3">
    <original>F</original>
    <variation>D</variation>
    <location>
        <position position="44"/>
    </location>
</feature>
<feature type="mutagenesis site" description="Loss of interaction with CsrA." evidence="3">
    <original>Q</original>
    <variation>D</variation>
    <location>
        <position position="123"/>
    </location>
</feature>
<feature type="mutagenesis site" description="Loss of interaction with CsrA." evidence="3">
    <original>I</original>
    <variation>D</variation>
    <location>
        <position position="125"/>
    </location>
</feature>
<feature type="strand" evidence="7">
    <location>
        <begin position="6"/>
        <end position="8"/>
    </location>
</feature>
<feature type="strand" evidence="7">
    <location>
        <begin position="10"/>
        <end position="12"/>
    </location>
</feature>
<feature type="helix" evidence="7">
    <location>
        <begin position="15"/>
        <end position="17"/>
    </location>
</feature>
<feature type="strand" evidence="7">
    <location>
        <begin position="33"/>
        <end position="38"/>
    </location>
</feature>
<feature type="strand" evidence="8">
    <location>
        <begin position="40"/>
        <end position="43"/>
    </location>
</feature>
<feature type="strand" evidence="7">
    <location>
        <begin position="44"/>
        <end position="51"/>
    </location>
</feature>
<feature type="strand" evidence="7">
    <location>
        <begin position="56"/>
        <end position="60"/>
    </location>
</feature>
<feature type="helix" evidence="7">
    <location>
        <begin position="62"/>
        <end position="64"/>
    </location>
</feature>
<feature type="helix" evidence="7">
    <location>
        <begin position="75"/>
        <end position="80"/>
    </location>
</feature>
<feature type="helix" evidence="7">
    <location>
        <begin position="86"/>
        <end position="88"/>
    </location>
</feature>
<feature type="strand" evidence="7">
    <location>
        <begin position="89"/>
        <end position="96"/>
    </location>
</feature>
<feature type="helix" evidence="7">
    <location>
        <begin position="101"/>
        <end position="103"/>
    </location>
</feature>
<feature type="strand" evidence="7">
    <location>
        <begin position="112"/>
        <end position="115"/>
    </location>
</feature>
<feature type="turn" evidence="7">
    <location>
        <begin position="116"/>
        <end position="119"/>
    </location>
</feature>
<feature type="strand" evidence="7">
    <location>
        <begin position="120"/>
        <end position="123"/>
    </location>
</feature>
<feature type="strand" evidence="7">
    <location>
        <begin position="128"/>
        <end position="130"/>
    </location>
</feature>
<feature type="strand" evidence="7">
    <location>
        <begin position="135"/>
        <end position="138"/>
    </location>
</feature>
<evidence type="ECO:0000250" key="1">
    <source>
        <dbReference type="UniProtKB" id="P96503"/>
    </source>
</evidence>
<evidence type="ECO:0000255" key="2">
    <source>
        <dbReference type="HAMAP-Rule" id="MF_01185"/>
    </source>
</evidence>
<evidence type="ECO:0000269" key="3">
    <source>
    </source>
</evidence>
<evidence type="ECO:0007744" key="4">
    <source>
        <dbReference type="PDB" id="5DMB"/>
    </source>
</evidence>
<evidence type="ECO:0007744" key="5">
    <source>
        <dbReference type="PDB" id="5DMD"/>
    </source>
</evidence>
<evidence type="ECO:0007744" key="6">
    <source>
        <dbReference type="PDB" id="5JAK"/>
    </source>
</evidence>
<evidence type="ECO:0007829" key="7">
    <source>
        <dbReference type="PDB" id="5DMD"/>
    </source>
</evidence>
<evidence type="ECO:0007829" key="8">
    <source>
        <dbReference type="PDB" id="5JAK"/>
    </source>
</evidence>
<proteinExistence type="evidence at protein level"/>
<accession>A4ISV0</accession>
<keyword id="KW-0002">3D-structure</keyword>
<keyword id="KW-1005">Bacterial flagellum biogenesis</keyword>
<keyword id="KW-0143">Chaperone</keyword>
<keyword id="KW-0963">Cytoplasm</keyword>
<keyword id="KW-0810">Translation regulation</keyword>